<sequence>MEGYKSFLVFLVSSLLLGFLGVIFTLVWVLHWREGLGWDGGAAEFNWHPVLVTSGFIFIQGIAIIVYRLPWTWNCSKLLMKFIHAGLHLTAFVFTIVALVAVFDFHNAKNIPNMYSLHSWIGLTVVILYALQLVLGVSIYLLPFARDTLRAALMPVHVYSGLLIFGTVIATALMGITEKLIFSLKEPPYSKMPPEAIFVNTFGLIILVFGGLVVWMVTTPAWKRPREQEIKALNPTVSSPDGTEEGSTITDCSNTEKSDVELNSEAARKRILKLDDAGQRSTM</sequence>
<evidence type="ECO:0000250" key="1">
    <source>
        <dbReference type="UniProtKB" id="Q53TN4"/>
    </source>
</evidence>
<evidence type="ECO:0000250" key="2">
    <source>
        <dbReference type="UniProtKB" id="Q925G2"/>
    </source>
</evidence>
<evidence type="ECO:0000255" key="3">
    <source>
        <dbReference type="PROSITE-ProRule" id="PRU00242"/>
    </source>
</evidence>
<evidence type="ECO:0000256" key="4">
    <source>
        <dbReference type="SAM" id="MobiDB-lite"/>
    </source>
</evidence>
<evidence type="ECO:0000305" key="5"/>
<reference key="1">
    <citation type="submission" date="2005-02" db="EMBL/GenBank/DDBJ databases">
        <authorList>
            <consortium name="NIH - Xenopus Gene Collection (XGC) project"/>
        </authorList>
    </citation>
    <scope>NUCLEOTIDE SEQUENCE [LARGE SCALE MRNA]</scope>
    <source>
        <tissue>Embryo</tissue>
    </source>
</reference>
<comment type="function">
    <text evidence="1 2">Plasma membrane reductase that uses cytoplasmic ascorbate as an electron donor to reduce extracellular Fe(3+) into Fe(2+). It is also able to reduce extracellular monodehydro-L-ascorbate and may be involved in extracellular ascorbate regeneration (By similarity). May also function as a cupric transmembrane reductase (By similarity).</text>
</comment>
<comment type="catalytic activity">
    <reaction evidence="1">
        <text>Fe(3+)(out) + L-ascorbate(in) = monodehydro-L-ascorbate radical(in) + Fe(2+)(out) + H(+)</text>
        <dbReference type="Rhea" id="RHEA:30403"/>
        <dbReference type="ChEBI" id="CHEBI:15378"/>
        <dbReference type="ChEBI" id="CHEBI:29033"/>
        <dbReference type="ChEBI" id="CHEBI:29034"/>
        <dbReference type="ChEBI" id="CHEBI:38290"/>
        <dbReference type="ChEBI" id="CHEBI:59513"/>
        <dbReference type="EC" id="7.2.1.3"/>
    </reaction>
    <physiologicalReaction direction="left-to-right" evidence="1">
        <dbReference type="Rhea" id="RHEA:30404"/>
    </physiologicalReaction>
</comment>
<comment type="catalytic activity">
    <reaction evidence="2">
        <text>Cu(2+)(out) + L-ascorbate(in) = Cu(+)(out) + monodehydro-L-ascorbate radical(in) + H(+)</text>
        <dbReference type="Rhea" id="RHEA:66656"/>
        <dbReference type="ChEBI" id="CHEBI:15378"/>
        <dbReference type="ChEBI" id="CHEBI:29036"/>
        <dbReference type="ChEBI" id="CHEBI:38290"/>
        <dbReference type="ChEBI" id="CHEBI:49552"/>
        <dbReference type="ChEBI" id="CHEBI:59513"/>
    </reaction>
    <physiologicalReaction direction="left-to-right" evidence="2">
        <dbReference type="Rhea" id="RHEA:66657"/>
    </physiologicalReaction>
</comment>
<comment type="catalytic activity">
    <reaction evidence="1">
        <text>monodehydro-L-ascorbate radical(out) + L-ascorbate(in) = monodehydro-L-ascorbate radical(in) + L-ascorbate(out)</text>
        <dbReference type="Rhea" id="RHEA:66524"/>
        <dbReference type="ChEBI" id="CHEBI:38290"/>
        <dbReference type="ChEBI" id="CHEBI:59513"/>
    </reaction>
    <physiologicalReaction direction="left-to-right" evidence="1">
        <dbReference type="Rhea" id="RHEA:66525"/>
    </physiologicalReaction>
</comment>
<comment type="cofactor">
    <cofactor evidence="1">
        <name>heme b</name>
        <dbReference type="ChEBI" id="CHEBI:60344"/>
    </cofactor>
    <text evidence="1">Binds 2 heme b groups non-covalently.</text>
</comment>
<comment type="subunit">
    <text evidence="1">Homodimer.</text>
</comment>
<comment type="subcellular location">
    <subcellularLocation>
        <location evidence="1">Cell membrane</location>
        <topology evidence="1">Multi-pass membrane protein</topology>
    </subcellularLocation>
    <subcellularLocation>
        <location evidence="1">Apical cell membrane</location>
        <topology evidence="1">Multi-pass membrane protein</topology>
    </subcellularLocation>
</comment>
<comment type="sequence caution" evidence="5">
    <conflict type="erroneous initiation">
        <sequence resource="EMBL-CDS" id="AAH90803"/>
    </conflict>
</comment>
<name>CYBR1_XENTR</name>
<organism>
    <name type="scientific">Xenopus tropicalis</name>
    <name type="common">Western clawed frog</name>
    <name type="synonym">Silurana tropicalis</name>
    <dbReference type="NCBI Taxonomy" id="8364"/>
    <lineage>
        <taxon>Eukaryota</taxon>
        <taxon>Metazoa</taxon>
        <taxon>Chordata</taxon>
        <taxon>Craniata</taxon>
        <taxon>Vertebrata</taxon>
        <taxon>Euteleostomi</taxon>
        <taxon>Amphibia</taxon>
        <taxon>Batrachia</taxon>
        <taxon>Anura</taxon>
        <taxon>Pipoidea</taxon>
        <taxon>Pipidae</taxon>
        <taxon>Xenopodinae</taxon>
        <taxon>Xenopus</taxon>
        <taxon>Silurana</taxon>
    </lineage>
</organism>
<accession>Q5CZL8</accession>
<accession>A4QNJ8</accession>
<dbReference type="EC" id="7.2.1.3" evidence="1"/>
<dbReference type="EMBL" id="BC090803">
    <property type="protein sequence ID" value="AAH90803.1"/>
    <property type="status" value="ALT_INIT"/>
    <property type="molecule type" value="mRNA"/>
</dbReference>
<dbReference type="EMBL" id="BC135773">
    <property type="protein sequence ID" value="AAI35774.1"/>
    <property type="molecule type" value="mRNA"/>
</dbReference>
<dbReference type="RefSeq" id="NP_001165750.1">
    <property type="nucleotide sequence ID" value="NM_001172279.1"/>
</dbReference>
<dbReference type="SMR" id="Q5CZL8"/>
<dbReference type="FunCoup" id="Q5CZL8">
    <property type="interactions" value="322"/>
</dbReference>
<dbReference type="STRING" id="8364.ENSXETP00000004159"/>
<dbReference type="PaxDb" id="8364-ENSXETP00000040828"/>
<dbReference type="GeneID" id="548408"/>
<dbReference type="KEGG" id="xtr:548408"/>
<dbReference type="AGR" id="Xenbase:XB-GENE-1011687"/>
<dbReference type="CTD" id="79901"/>
<dbReference type="Xenbase" id="XB-GENE-1011687">
    <property type="gene designation" value="cybrd1"/>
</dbReference>
<dbReference type="eggNOG" id="KOG1619">
    <property type="taxonomic scope" value="Eukaryota"/>
</dbReference>
<dbReference type="InParanoid" id="Q5CZL8"/>
<dbReference type="OrthoDB" id="907479at2759"/>
<dbReference type="Reactome" id="R-XTR-917937">
    <property type="pathway name" value="Iron uptake and transport"/>
</dbReference>
<dbReference type="Proteomes" id="UP000008143">
    <property type="component" value="Chromosome 9"/>
</dbReference>
<dbReference type="Bgee" id="ENSXETG00000018825">
    <property type="expression patterns" value="Expressed in heart and 13 other cell types or tissues"/>
</dbReference>
<dbReference type="ExpressionAtlas" id="Q5CZL8">
    <property type="expression patterns" value="baseline"/>
</dbReference>
<dbReference type="GO" id="GO:0016324">
    <property type="term" value="C:apical plasma membrane"/>
    <property type="evidence" value="ECO:0000250"/>
    <property type="project" value="UniProtKB"/>
</dbReference>
<dbReference type="GO" id="GO:0031526">
    <property type="term" value="C:brush border membrane"/>
    <property type="evidence" value="ECO:0000250"/>
    <property type="project" value="UniProtKB"/>
</dbReference>
<dbReference type="GO" id="GO:0016020">
    <property type="term" value="C:membrane"/>
    <property type="evidence" value="ECO:0000250"/>
    <property type="project" value="UniProtKB"/>
</dbReference>
<dbReference type="GO" id="GO:0042802">
    <property type="term" value="F:identical protein binding"/>
    <property type="evidence" value="ECO:0000250"/>
    <property type="project" value="UniProtKB"/>
</dbReference>
<dbReference type="GO" id="GO:0046872">
    <property type="term" value="F:metal ion binding"/>
    <property type="evidence" value="ECO:0007669"/>
    <property type="project" value="UniProtKB-KW"/>
</dbReference>
<dbReference type="GO" id="GO:0140571">
    <property type="term" value="F:transmembrane ascorbate ferrireductase activity"/>
    <property type="evidence" value="ECO:0000250"/>
    <property type="project" value="UniProtKB"/>
</dbReference>
<dbReference type="GO" id="GO:0140575">
    <property type="term" value="F:transmembrane monodehydroascorbate reductase activity"/>
    <property type="evidence" value="ECO:0000250"/>
    <property type="project" value="UniProtKB"/>
</dbReference>
<dbReference type="GO" id="GO:0140576">
    <property type="term" value="P:ascorbate homeostasis"/>
    <property type="evidence" value="ECO:0000250"/>
    <property type="project" value="UniProtKB"/>
</dbReference>
<dbReference type="GO" id="GO:0060586">
    <property type="term" value="P:multicellular organismal-level iron ion homeostasis"/>
    <property type="evidence" value="ECO:0000250"/>
    <property type="project" value="UniProtKB"/>
</dbReference>
<dbReference type="CDD" id="cd08765">
    <property type="entry name" value="Cyt_b561_CYBRD1"/>
    <property type="match status" value="1"/>
</dbReference>
<dbReference type="FunFam" id="1.20.120.1770:FF:000001">
    <property type="entry name" value="Cytochrome b reductase 1"/>
    <property type="match status" value="1"/>
</dbReference>
<dbReference type="Gene3D" id="1.20.120.1770">
    <property type="match status" value="1"/>
</dbReference>
<dbReference type="InterPro" id="IPR043205">
    <property type="entry name" value="CYB561/CYBRD1-like"/>
</dbReference>
<dbReference type="InterPro" id="IPR006593">
    <property type="entry name" value="Cyt_b561/ferric_Rdtase_TM"/>
</dbReference>
<dbReference type="PANTHER" id="PTHR10106">
    <property type="entry name" value="CYTOCHROME B561-RELATED"/>
    <property type="match status" value="1"/>
</dbReference>
<dbReference type="PANTHER" id="PTHR10106:SF12">
    <property type="entry name" value="PLASMA MEMBRANE ASCORBATE-DEPENDENT REDUCTASE CYBRD1"/>
    <property type="match status" value="1"/>
</dbReference>
<dbReference type="Pfam" id="PF03188">
    <property type="entry name" value="Cytochrom_B561"/>
    <property type="match status" value="1"/>
</dbReference>
<dbReference type="SMART" id="SM00665">
    <property type="entry name" value="B561"/>
    <property type="match status" value="1"/>
</dbReference>
<dbReference type="PROSITE" id="PS50939">
    <property type="entry name" value="CYTOCHROME_B561"/>
    <property type="match status" value="1"/>
</dbReference>
<gene>
    <name type="primary">cybrd1</name>
</gene>
<keyword id="KW-1003">Cell membrane</keyword>
<keyword id="KW-0249">Electron transport</keyword>
<keyword id="KW-0349">Heme</keyword>
<keyword id="KW-0408">Iron</keyword>
<keyword id="KW-0472">Membrane</keyword>
<keyword id="KW-0479">Metal-binding</keyword>
<keyword id="KW-0560">Oxidoreductase</keyword>
<keyword id="KW-1185">Reference proteome</keyword>
<keyword id="KW-1278">Translocase</keyword>
<keyword id="KW-0812">Transmembrane</keyword>
<keyword id="KW-1133">Transmembrane helix</keyword>
<keyword id="KW-0813">Transport</keyword>
<feature type="chain" id="PRO_0000314836" description="Plasma membrane ascorbate-dependent reductase CYBRD1">
    <location>
        <begin position="1"/>
        <end position="283"/>
    </location>
</feature>
<feature type="topological domain" description="Cytoplasmic" evidence="1">
    <location>
        <begin position="1"/>
        <end position="5"/>
    </location>
</feature>
<feature type="transmembrane region" description="Helical; Name=1" evidence="1">
    <location>
        <begin position="6"/>
        <end position="30"/>
    </location>
</feature>
<feature type="topological domain" description="Extracellular" evidence="1">
    <location>
        <begin position="31"/>
        <end position="45"/>
    </location>
</feature>
<feature type="transmembrane region" description="Helical; Name=2" evidence="1">
    <location>
        <begin position="46"/>
        <end position="67"/>
    </location>
</feature>
<feature type="topological domain" description="Cytoplasmic" evidence="1">
    <location>
        <begin position="68"/>
        <end position="76"/>
    </location>
</feature>
<feature type="transmembrane region" description="Helical; Name=3" evidence="1">
    <location>
        <begin position="77"/>
        <end position="103"/>
    </location>
</feature>
<feature type="topological domain" description="Extracellular" evidence="1">
    <location>
        <begin position="104"/>
        <end position="116"/>
    </location>
</feature>
<feature type="transmembrane region" description="Helical; Name=4" evidence="1">
    <location>
        <begin position="117"/>
        <end position="142"/>
    </location>
</feature>
<feature type="topological domain" description="Cytoplasmic" evidence="1">
    <location>
        <begin position="143"/>
        <end position="149"/>
    </location>
</feature>
<feature type="transmembrane region" description="Helical; Name=5" evidence="1">
    <location>
        <begin position="150"/>
        <end position="177"/>
    </location>
</feature>
<feature type="topological domain" description="Extracellular" evidence="1">
    <location>
        <begin position="178"/>
        <end position="195"/>
    </location>
</feature>
<feature type="transmembrane region" description="Helical; Name=6" evidence="1">
    <location>
        <begin position="196"/>
        <end position="220"/>
    </location>
</feature>
<feature type="topological domain" description="Cytoplasmic" evidence="1">
    <location>
        <begin position="221"/>
        <end position="283"/>
    </location>
</feature>
<feature type="domain" description="Cytochrome b561" evidence="3">
    <location>
        <begin position="13"/>
        <end position="218"/>
    </location>
</feature>
<feature type="region of interest" description="Disordered" evidence="4">
    <location>
        <begin position="234"/>
        <end position="263"/>
    </location>
</feature>
<feature type="compositionally biased region" description="Polar residues" evidence="4">
    <location>
        <begin position="235"/>
        <end position="253"/>
    </location>
</feature>
<feature type="compositionally biased region" description="Basic and acidic residues" evidence="4">
    <location>
        <begin position="254"/>
        <end position="263"/>
    </location>
</feature>
<feature type="binding site" description="axial binding residue" evidence="1">
    <location>
        <position position="48"/>
    </location>
    <ligand>
        <name>heme b</name>
        <dbReference type="ChEBI" id="CHEBI:60344"/>
        <label>1</label>
    </ligand>
    <ligandPart>
        <name>Fe</name>
        <dbReference type="ChEBI" id="CHEBI:18248"/>
    </ligandPart>
</feature>
<feature type="binding site" evidence="1">
    <location>
        <position position="68"/>
    </location>
    <ligand>
        <name>heme b</name>
        <dbReference type="ChEBI" id="CHEBI:60344"/>
        <label>2</label>
    </ligand>
</feature>
<feature type="binding site" evidence="1">
    <location>
        <position position="77"/>
    </location>
    <ligand>
        <name>heme b</name>
        <dbReference type="ChEBI" id="CHEBI:60344"/>
        <label>2</label>
    </ligand>
</feature>
<feature type="binding site" evidence="1">
    <location>
        <position position="77"/>
    </location>
    <ligand>
        <name>L-ascorbate</name>
        <dbReference type="ChEBI" id="CHEBI:38290"/>
    </ligand>
</feature>
<feature type="binding site" evidence="1">
    <location>
        <position position="81"/>
    </location>
    <ligand>
        <name>L-ascorbate</name>
        <dbReference type="ChEBI" id="CHEBI:38290"/>
    </ligand>
</feature>
<feature type="binding site" description="axial binding residue" evidence="1">
    <location>
        <position position="84"/>
    </location>
    <ligand>
        <name>heme b</name>
        <dbReference type="ChEBI" id="CHEBI:60344"/>
        <label>2</label>
    </ligand>
    <ligandPart>
        <name>Fe</name>
        <dbReference type="ChEBI" id="CHEBI:18248"/>
    </ligandPart>
</feature>
<feature type="binding site" evidence="1">
    <location>
        <position position="106"/>
    </location>
    <ligand>
        <name>Fe(3+)</name>
        <dbReference type="ChEBI" id="CHEBI:29034"/>
        <note>substrate</note>
    </ligand>
</feature>
<feature type="binding site" evidence="1">
    <location>
        <begin position="113"/>
        <end position="116"/>
    </location>
    <ligand>
        <name>heme b</name>
        <dbReference type="ChEBI" id="CHEBI:60344"/>
        <label>1</label>
    </ligand>
</feature>
<feature type="binding site" description="axial binding residue" evidence="1">
    <location>
        <position position="118"/>
    </location>
    <ligand>
        <name>heme b</name>
        <dbReference type="ChEBI" id="CHEBI:60344"/>
        <label>1</label>
    </ligand>
    <ligandPart>
        <name>Fe</name>
        <dbReference type="ChEBI" id="CHEBI:18248"/>
    </ligandPart>
</feature>
<feature type="binding site" evidence="1">
    <location>
        <position position="150"/>
    </location>
    <ligand>
        <name>L-ascorbate</name>
        <dbReference type="ChEBI" id="CHEBI:38290"/>
    </ligand>
</feature>
<feature type="binding site" description="axial binding residue" evidence="1">
    <location>
        <position position="157"/>
    </location>
    <ligand>
        <name>heme b</name>
        <dbReference type="ChEBI" id="CHEBI:60344"/>
        <label>2</label>
    </ligand>
    <ligandPart>
        <name>Fe</name>
        <dbReference type="ChEBI" id="CHEBI:18248"/>
    </ligandPart>
</feature>
<feature type="binding site" evidence="1">
    <location>
        <position position="178"/>
    </location>
    <ligand>
        <name>heme b</name>
        <dbReference type="ChEBI" id="CHEBI:60344"/>
        <label>1</label>
    </ligand>
</feature>
<feature type="binding site" evidence="1">
    <location>
        <position position="223"/>
    </location>
    <ligand>
        <name>heme b</name>
        <dbReference type="ChEBI" id="CHEBI:60344"/>
        <label>2</label>
    </ligand>
</feature>
<feature type="sequence conflict" description="In Ref. 1; AAI35774." evidence="5" ref="1">
    <original>F</original>
    <variation>L</variation>
    <location>
        <position position="92"/>
    </location>
</feature>
<proteinExistence type="evidence at transcript level"/>
<protein>
    <recommendedName>
        <fullName evidence="1">Plasma membrane ascorbate-dependent reductase CYBRD1</fullName>
        <ecNumber evidence="1">7.2.1.3</ecNumber>
    </recommendedName>
    <alternativeName>
        <fullName>Cytochrome b reductase 1</fullName>
    </alternativeName>
</protein>